<reference key="1">
    <citation type="journal article" date="2003" name="Nat. Genet.">
        <title>Comparative analysis of the genome sequences of Bordetella pertussis, Bordetella parapertussis and Bordetella bronchiseptica.</title>
        <authorList>
            <person name="Parkhill J."/>
            <person name="Sebaihia M."/>
            <person name="Preston A."/>
            <person name="Murphy L.D."/>
            <person name="Thomson N.R."/>
            <person name="Harris D.E."/>
            <person name="Holden M.T.G."/>
            <person name="Churcher C.M."/>
            <person name="Bentley S.D."/>
            <person name="Mungall K.L."/>
            <person name="Cerdeno-Tarraga A.-M."/>
            <person name="Temple L."/>
            <person name="James K.D."/>
            <person name="Harris B."/>
            <person name="Quail M.A."/>
            <person name="Achtman M."/>
            <person name="Atkin R."/>
            <person name="Baker S."/>
            <person name="Basham D."/>
            <person name="Bason N."/>
            <person name="Cherevach I."/>
            <person name="Chillingworth T."/>
            <person name="Collins M."/>
            <person name="Cronin A."/>
            <person name="Davis P."/>
            <person name="Doggett J."/>
            <person name="Feltwell T."/>
            <person name="Goble A."/>
            <person name="Hamlin N."/>
            <person name="Hauser H."/>
            <person name="Holroyd S."/>
            <person name="Jagels K."/>
            <person name="Leather S."/>
            <person name="Moule S."/>
            <person name="Norberczak H."/>
            <person name="O'Neil S."/>
            <person name="Ormond D."/>
            <person name="Price C."/>
            <person name="Rabbinowitsch E."/>
            <person name="Rutter S."/>
            <person name="Sanders M."/>
            <person name="Saunders D."/>
            <person name="Seeger K."/>
            <person name="Sharp S."/>
            <person name="Simmonds M."/>
            <person name="Skelton J."/>
            <person name="Squares R."/>
            <person name="Squares S."/>
            <person name="Stevens K."/>
            <person name="Unwin L."/>
            <person name="Whitehead S."/>
            <person name="Barrell B.G."/>
            <person name="Maskell D.J."/>
        </authorList>
    </citation>
    <scope>NUCLEOTIDE SEQUENCE [LARGE SCALE GENOMIC DNA]</scope>
    <source>
        <strain>Tohama I / ATCC BAA-589 / NCTC 13251</strain>
    </source>
</reference>
<proteinExistence type="inferred from homology"/>
<keyword id="KW-0012">Acyltransferase</keyword>
<keyword id="KW-0963">Cytoplasm</keyword>
<keyword id="KW-1185">Reference proteome</keyword>
<keyword id="KW-0808">Transferase</keyword>
<gene>
    <name evidence="1" type="primary">lipB</name>
    <name type="ordered locus">BP0105</name>
</gene>
<dbReference type="EC" id="2.3.1.181" evidence="1"/>
<dbReference type="EMBL" id="BX640411">
    <property type="protein sequence ID" value="CAE40485.1"/>
    <property type="molecule type" value="Genomic_DNA"/>
</dbReference>
<dbReference type="RefSeq" id="NP_879008.1">
    <property type="nucleotide sequence ID" value="NC_002929.2"/>
</dbReference>
<dbReference type="RefSeq" id="WP_010929623.1">
    <property type="nucleotide sequence ID" value="NZ_CP039022.1"/>
</dbReference>
<dbReference type="SMR" id="Q7W0K9"/>
<dbReference type="STRING" id="257313.BP0105"/>
<dbReference type="PaxDb" id="257313-BP0105"/>
<dbReference type="GeneID" id="69603636"/>
<dbReference type="KEGG" id="bpe:BP0105"/>
<dbReference type="PATRIC" id="fig|257313.5.peg.106"/>
<dbReference type="eggNOG" id="COG0321">
    <property type="taxonomic scope" value="Bacteria"/>
</dbReference>
<dbReference type="HOGENOM" id="CLU_035168_3_1_4"/>
<dbReference type="UniPathway" id="UPA00538">
    <property type="reaction ID" value="UER00592"/>
</dbReference>
<dbReference type="Proteomes" id="UP000002676">
    <property type="component" value="Chromosome"/>
</dbReference>
<dbReference type="GO" id="GO:0005737">
    <property type="term" value="C:cytoplasm"/>
    <property type="evidence" value="ECO:0007669"/>
    <property type="project" value="UniProtKB-SubCell"/>
</dbReference>
<dbReference type="GO" id="GO:0033819">
    <property type="term" value="F:lipoyl(octanoyl) transferase activity"/>
    <property type="evidence" value="ECO:0007669"/>
    <property type="project" value="UniProtKB-EC"/>
</dbReference>
<dbReference type="GO" id="GO:0036211">
    <property type="term" value="P:protein modification process"/>
    <property type="evidence" value="ECO:0007669"/>
    <property type="project" value="InterPro"/>
</dbReference>
<dbReference type="CDD" id="cd16444">
    <property type="entry name" value="LipB"/>
    <property type="match status" value="1"/>
</dbReference>
<dbReference type="FunFam" id="3.30.930.10:FF:000020">
    <property type="entry name" value="Octanoyltransferase"/>
    <property type="match status" value="1"/>
</dbReference>
<dbReference type="Gene3D" id="3.30.930.10">
    <property type="entry name" value="Bira Bifunctional Protein, Domain 2"/>
    <property type="match status" value="1"/>
</dbReference>
<dbReference type="HAMAP" id="MF_00013">
    <property type="entry name" value="LipB"/>
    <property type="match status" value="1"/>
</dbReference>
<dbReference type="InterPro" id="IPR045864">
    <property type="entry name" value="aa-tRNA-synth_II/BPL/LPL"/>
</dbReference>
<dbReference type="InterPro" id="IPR004143">
    <property type="entry name" value="BPL_LPL_catalytic"/>
</dbReference>
<dbReference type="InterPro" id="IPR000544">
    <property type="entry name" value="Octanoyltransferase"/>
</dbReference>
<dbReference type="InterPro" id="IPR020605">
    <property type="entry name" value="Octanoyltransferase_CS"/>
</dbReference>
<dbReference type="NCBIfam" id="TIGR00214">
    <property type="entry name" value="lipB"/>
    <property type="match status" value="1"/>
</dbReference>
<dbReference type="NCBIfam" id="NF010922">
    <property type="entry name" value="PRK14342.1"/>
    <property type="match status" value="1"/>
</dbReference>
<dbReference type="PANTHER" id="PTHR10993:SF7">
    <property type="entry name" value="LIPOYLTRANSFERASE 2, MITOCHONDRIAL-RELATED"/>
    <property type="match status" value="1"/>
</dbReference>
<dbReference type="PANTHER" id="PTHR10993">
    <property type="entry name" value="OCTANOYLTRANSFERASE"/>
    <property type="match status" value="1"/>
</dbReference>
<dbReference type="Pfam" id="PF21948">
    <property type="entry name" value="LplA-B_cat"/>
    <property type="match status" value="1"/>
</dbReference>
<dbReference type="PIRSF" id="PIRSF016262">
    <property type="entry name" value="LPLase"/>
    <property type="match status" value="1"/>
</dbReference>
<dbReference type="SUPFAM" id="SSF55681">
    <property type="entry name" value="Class II aaRS and biotin synthetases"/>
    <property type="match status" value="1"/>
</dbReference>
<dbReference type="PROSITE" id="PS51733">
    <property type="entry name" value="BPL_LPL_CATALYTIC"/>
    <property type="match status" value="1"/>
</dbReference>
<dbReference type="PROSITE" id="PS01313">
    <property type="entry name" value="LIPB"/>
    <property type="match status" value="1"/>
</dbReference>
<sequence>MIKWLARPADYASVWDAMKTFTAARGPGTADEIWLCEHAPVYTLGQVGRPEHLLNPGLIPVVHCDRGGQVTYHGPGQVLAYTLFDLRRAGLYVREYVDMLEQATLATLRELGLEQACRKPGAPGIYVPQPGGELAKIAALGVKVRNGYAYHGLALNIDMDLSPFLGINPCGYEGLRTVDLAACGVRTSVERAGELLAAQLARAHGQAVQQRAAALAGVPG</sequence>
<comment type="function">
    <text evidence="1">Catalyzes the transfer of endogenously produced octanoic acid from octanoyl-acyl-carrier-protein onto the lipoyl domains of lipoate-dependent enzymes. Lipoyl-ACP can also act as a substrate although octanoyl-ACP is likely to be the physiological substrate.</text>
</comment>
<comment type="catalytic activity">
    <reaction evidence="1">
        <text>octanoyl-[ACP] + L-lysyl-[protein] = N(6)-octanoyl-L-lysyl-[protein] + holo-[ACP] + H(+)</text>
        <dbReference type="Rhea" id="RHEA:17665"/>
        <dbReference type="Rhea" id="RHEA-COMP:9636"/>
        <dbReference type="Rhea" id="RHEA-COMP:9685"/>
        <dbReference type="Rhea" id="RHEA-COMP:9752"/>
        <dbReference type="Rhea" id="RHEA-COMP:9928"/>
        <dbReference type="ChEBI" id="CHEBI:15378"/>
        <dbReference type="ChEBI" id="CHEBI:29969"/>
        <dbReference type="ChEBI" id="CHEBI:64479"/>
        <dbReference type="ChEBI" id="CHEBI:78463"/>
        <dbReference type="ChEBI" id="CHEBI:78809"/>
        <dbReference type="EC" id="2.3.1.181"/>
    </reaction>
</comment>
<comment type="pathway">
    <text evidence="1">Protein modification; protein lipoylation via endogenous pathway; protein N(6)-(lipoyl)lysine from octanoyl-[acyl-carrier-protein]: step 1/2.</text>
</comment>
<comment type="subcellular location">
    <subcellularLocation>
        <location evidence="1">Cytoplasm</location>
    </subcellularLocation>
</comment>
<comment type="miscellaneous">
    <text evidence="1">In the reaction, the free carboxyl group of octanoic acid is attached via an amide linkage to the epsilon-amino group of a specific lysine residue of lipoyl domains of lipoate-dependent enzymes.</text>
</comment>
<comment type="similarity">
    <text evidence="1">Belongs to the LipB family.</text>
</comment>
<evidence type="ECO:0000255" key="1">
    <source>
        <dbReference type="HAMAP-Rule" id="MF_00013"/>
    </source>
</evidence>
<evidence type="ECO:0000255" key="2">
    <source>
        <dbReference type="PROSITE-ProRule" id="PRU01067"/>
    </source>
</evidence>
<organism>
    <name type="scientific">Bordetella pertussis (strain Tohama I / ATCC BAA-589 / NCTC 13251)</name>
    <dbReference type="NCBI Taxonomy" id="257313"/>
    <lineage>
        <taxon>Bacteria</taxon>
        <taxon>Pseudomonadati</taxon>
        <taxon>Pseudomonadota</taxon>
        <taxon>Betaproteobacteria</taxon>
        <taxon>Burkholderiales</taxon>
        <taxon>Alcaligenaceae</taxon>
        <taxon>Bordetella</taxon>
    </lineage>
</organism>
<protein>
    <recommendedName>
        <fullName evidence="1">Octanoyltransferase</fullName>
        <ecNumber evidence="1">2.3.1.181</ecNumber>
    </recommendedName>
    <alternativeName>
        <fullName evidence="1">Lipoate-protein ligase B</fullName>
    </alternativeName>
    <alternativeName>
        <fullName evidence="1">Lipoyl/octanoyl transferase</fullName>
    </alternativeName>
    <alternativeName>
        <fullName evidence="1">Octanoyl-[acyl-carrier-protein]-protein N-octanoyltransferase</fullName>
    </alternativeName>
</protein>
<name>LIPB_BORPE</name>
<feature type="chain" id="PRO_0000062816" description="Octanoyltransferase">
    <location>
        <begin position="1"/>
        <end position="220"/>
    </location>
</feature>
<feature type="domain" description="BPL/LPL catalytic" evidence="2">
    <location>
        <begin position="27"/>
        <end position="208"/>
    </location>
</feature>
<feature type="active site" description="Acyl-thioester intermediate" evidence="1">
    <location>
        <position position="170"/>
    </location>
</feature>
<feature type="binding site" evidence="1">
    <location>
        <begin position="66"/>
        <end position="73"/>
    </location>
    <ligand>
        <name>substrate</name>
    </ligand>
</feature>
<feature type="binding site" evidence="1">
    <location>
        <begin position="139"/>
        <end position="141"/>
    </location>
    <ligand>
        <name>substrate</name>
    </ligand>
</feature>
<feature type="binding site" evidence="1">
    <location>
        <begin position="152"/>
        <end position="154"/>
    </location>
    <ligand>
        <name>substrate</name>
    </ligand>
</feature>
<feature type="site" description="Lowers pKa of active site Cys" evidence="1">
    <location>
        <position position="136"/>
    </location>
</feature>
<accession>Q7W0K9</accession>